<comment type="alternative products">
    <event type="alternative splicing"/>
    <isoform>
        <id>A6NNP5-1</id>
        <name>1</name>
        <sequence type="displayed"/>
    </isoform>
    <isoform>
        <id>A6NNP5-2</id>
        <name>2</name>
        <sequence type="described" ref="VSP_035636 VSP_035637"/>
    </isoform>
    <isoform>
        <id>A6NNP5-3</id>
        <name>3</name>
        <sequence type="described" ref="VSP_040479 VSP_040480"/>
    </isoform>
    <isoform>
        <id>A6NNP5-4</id>
        <name>4</name>
        <sequence type="described" ref="VSP_040480"/>
    </isoform>
    <isoform>
        <id>A6NNP5-5</id>
        <name>5</name>
        <sequence type="described" ref="VSP_040479"/>
    </isoform>
    <isoform>
        <id>A6NNP5-6</id>
        <name>6</name>
        <sequence type="described" ref="VSP_043810 VSP_043811 VSP_040480"/>
    </isoform>
</comment>
<comment type="similarity">
    <text evidence="5">Belongs to the CCDC169 family.</text>
</comment>
<dbReference type="EMBL" id="AK308999">
    <property type="status" value="NOT_ANNOTATED_CDS"/>
    <property type="molecule type" value="mRNA"/>
</dbReference>
<dbReference type="EMBL" id="AL139377">
    <property type="status" value="NOT_ANNOTATED_CDS"/>
    <property type="molecule type" value="Genomic_DNA"/>
</dbReference>
<dbReference type="EMBL" id="BC146975">
    <property type="protein sequence ID" value="AAI46976.1"/>
    <property type="molecule type" value="mRNA"/>
</dbReference>
<dbReference type="EMBL" id="BC171867">
    <property type="protein sequence ID" value="AAI71867.1"/>
    <property type="molecule type" value="mRNA"/>
</dbReference>
<dbReference type="EMBL" id="BC171872">
    <property type="protein sequence ID" value="AAI71872.1"/>
    <property type="molecule type" value="mRNA"/>
</dbReference>
<dbReference type="EMBL" id="BC171874">
    <property type="protein sequence ID" value="AAI71874.1"/>
    <property type="molecule type" value="mRNA"/>
</dbReference>
<dbReference type="EMBL" id="BC171880">
    <property type="protein sequence ID" value="AAI71880.1"/>
    <property type="molecule type" value="mRNA"/>
</dbReference>
<dbReference type="EMBL" id="BC171881">
    <property type="protein sequence ID" value="AAI71881.1"/>
    <property type="molecule type" value="mRNA"/>
</dbReference>
<dbReference type="EMBL" id="BC171882">
    <property type="protein sequence ID" value="AAI71882.1"/>
    <property type="molecule type" value="mRNA"/>
</dbReference>
<dbReference type="CCDS" id="CCDS45027.1">
    <molecule id="A6NNP5-3"/>
</dbReference>
<dbReference type="CCDS" id="CCDS45028.1">
    <molecule id="A6NNP5-1"/>
</dbReference>
<dbReference type="CCDS" id="CCDS45029.1">
    <molecule id="A6NNP5-5"/>
</dbReference>
<dbReference type="CCDS" id="CCDS53863.1">
    <molecule id="A6NNP5-6"/>
</dbReference>
<dbReference type="CCDS" id="CCDS55897.1">
    <molecule id="A6NNP5-4"/>
</dbReference>
<dbReference type="RefSeq" id="NP_001138453.1">
    <molecule id="A6NNP5-1"/>
    <property type="nucleotide sequence ID" value="NM_001144981.3"/>
</dbReference>
<dbReference type="RefSeq" id="NP_001138454.1">
    <molecule id="A6NNP5-3"/>
    <property type="nucleotide sequence ID" value="NM_001144982.3"/>
</dbReference>
<dbReference type="RefSeq" id="NP_001138455.1">
    <molecule id="A6NNP5-3"/>
    <property type="nucleotide sequence ID" value="NM_001144983.3"/>
</dbReference>
<dbReference type="RefSeq" id="NP_001138456.1">
    <molecule id="A6NNP5-6"/>
    <property type="nucleotide sequence ID" value="NM_001144984.3"/>
</dbReference>
<dbReference type="RefSeq" id="NP_001138457.1">
    <molecule id="A6NNP5-5"/>
    <property type="nucleotide sequence ID" value="NM_001144985.3"/>
</dbReference>
<dbReference type="RefSeq" id="NP_001138458.1">
    <molecule id="A6NNP5-5"/>
    <property type="nucleotide sequence ID" value="NM_001144986.3"/>
</dbReference>
<dbReference type="RefSeq" id="NP_001185837.1">
    <molecule id="A6NNP5-4"/>
    <property type="nucleotide sequence ID" value="NM_001198908.2"/>
</dbReference>
<dbReference type="SMR" id="A6NNP5"/>
<dbReference type="BioGRID" id="609013">
    <property type="interactions" value="3"/>
</dbReference>
<dbReference type="FunCoup" id="A6NNP5">
    <property type="interactions" value="73"/>
</dbReference>
<dbReference type="STRING" id="9606.ENSP00000426174"/>
<dbReference type="iPTMnet" id="A6NNP5"/>
<dbReference type="PhosphoSitePlus" id="A6NNP5"/>
<dbReference type="BioMuta" id="CCDC169"/>
<dbReference type="jPOST" id="A6NNP5"/>
<dbReference type="MassIVE" id="A6NNP5"/>
<dbReference type="PaxDb" id="9606-ENSP00000426174"/>
<dbReference type="PeptideAtlas" id="A6NNP5"/>
<dbReference type="Antibodypedia" id="52943">
    <property type="antibodies" value="15 antibodies from 3 providers"/>
</dbReference>
<dbReference type="DNASU" id="728591"/>
<dbReference type="Ensembl" id="ENST00000239859.8">
    <molecule id="A6NNP5-1"/>
    <property type="protein sequence ID" value="ENSP00000239859.7"/>
    <property type="gene ID" value="ENSG00000242715.8"/>
</dbReference>
<dbReference type="Ensembl" id="ENST00000239860.10">
    <molecule id="A6NNP5-6"/>
    <property type="protein sequence ID" value="ENSP00000239860.6"/>
    <property type="gene ID" value="ENSG00000242715.8"/>
</dbReference>
<dbReference type="Ensembl" id="ENST00000379862.6">
    <molecule id="A6NNP5-5"/>
    <property type="protein sequence ID" value="ENSP00000369191.2"/>
    <property type="gene ID" value="ENSG00000242715.8"/>
</dbReference>
<dbReference type="Ensembl" id="ENST00000379864.6">
    <molecule id="A6NNP5-3"/>
    <property type="protein sequence ID" value="ENSP00000369193.2"/>
    <property type="gene ID" value="ENSG00000242715.8"/>
</dbReference>
<dbReference type="Ensembl" id="ENST00000491049.6">
    <molecule id="A6NNP5-3"/>
    <property type="protein sequence ID" value="ENSP00000425252.1"/>
    <property type="gene ID" value="ENSG00000242715.8"/>
</dbReference>
<dbReference type="Ensembl" id="ENST00000503173.5">
    <molecule id="A6NNP5-4"/>
    <property type="protein sequence ID" value="ENSP00000426174.1"/>
    <property type="gene ID" value="ENSG00000242715.8"/>
</dbReference>
<dbReference type="Ensembl" id="ENST00000510088.5">
    <molecule id="A6NNP5-5"/>
    <property type="protein sequence ID" value="ENSP00000427495.1"/>
    <property type="gene ID" value="ENSG00000242715.8"/>
</dbReference>
<dbReference type="GeneID" id="728591"/>
<dbReference type="KEGG" id="hsa:728591"/>
<dbReference type="MANE-Select" id="ENST00000239859.8">
    <property type="protein sequence ID" value="ENSP00000239859.7"/>
    <property type="RefSeq nucleotide sequence ID" value="NM_001144981.3"/>
    <property type="RefSeq protein sequence ID" value="NP_001138453.1"/>
</dbReference>
<dbReference type="UCSC" id="uc010abm.4">
    <molecule id="A6NNP5-1"/>
    <property type="organism name" value="human"/>
</dbReference>
<dbReference type="AGR" id="HGNC:34361"/>
<dbReference type="CTD" id="728591"/>
<dbReference type="GeneCards" id="CCDC169"/>
<dbReference type="HGNC" id="HGNC:34361">
    <property type="gene designation" value="CCDC169"/>
</dbReference>
<dbReference type="HPA" id="ENSG00000242715">
    <property type="expression patterns" value="Tissue enriched (testis)"/>
</dbReference>
<dbReference type="neXtProt" id="NX_A6NNP5"/>
<dbReference type="OpenTargets" id="ENSG00000242715"/>
<dbReference type="PharmGKB" id="PA162378105"/>
<dbReference type="VEuPathDB" id="HostDB:ENSG00000242715"/>
<dbReference type="eggNOG" id="ENOG502S1I0">
    <property type="taxonomic scope" value="Eukaryota"/>
</dbReference>
<dbReference type="GeneTree" id="ENSGT00390000011174"/>
<dbReference type="HOGENOM" id="CLU_2090285_0_0_1"/>
<dbReference type="InParanoid" id="A6NNP5"/>
<dbReference type="OMA" id="MPVGSLN"/>
<dbReference type="OrthoDB" id="6615663at2759"/>
<dbReference type="PAN-GO" id="A6NNP5">
    <property type="GO annotations" value="0 GO annotations based on evolutionary models"/>
</dbReference>
<dbReference type="PhylomeDB" id="A6NNP5"/>
<dbReference type="TreeFam" id="TF329642"/>
<dbReference type="PathwayCommons" id="A6NNP5"/>
<dbReference type="BioGRID-ORCS" id="728591">
    <property type="hits" value="24 hits in 1120 CRISPR screens"/>
</dbReference>
<dbReference type="GenomeRNAi" id="728591"/>
<dbReference type="Pharos" id="A6NNP5">
    <property type="development level" value="Tdark"/>
</dbReference>
<dbReference type="PRO" id="PR:A6NNP5"/>
<dbReference type="Proteomes" id="UP000005640">
    <property type="component" value="Chromosome 13"/>
</dbReference>
<dbReference type="RNAct" id="A6NNP5">
    <property type="molecule type" value="protein"/>
</dbReference>
<dbReference type="Bgee" id="ENSG00000242715">
    <property type="expression patterns" value="Expressed in sperm and 108 other cell types or tissues"/>
</dbReference>
<dbReference type="ExpressionAtlas" id="A6NNP5">
    <property type="expression patterns" value="baseline and differential"/>
</dbReference>
<dbReference type="InterPro" id="IPR028022">
    <property type="entry name" value="DUF4600"/>
</dbReference>
<dbReference type="PANTHER" id="PTHR28671">
    <property type="entry name" value="COILED-COIL DOMAIN-CONTAINING PROTEIN 169"/>
    <property type="match status" value="1"/>
</dbReference>
<dbReference type="PANTHER" id="PTHR28671:SF3">
    <property type="entry name" value="COILED-COIL DOMAIN-CONTAINING PROTEIN 169"/>
    <property type="match status" value="1"/>
</dbReference>
<dbReference type="Pfam" id="PF15372">
    <property type="entry name" value="DUF4600"/>
    <property type="match status" value="1"/>
</dbReference>
<name>CC169_HUMAN</name>
<organism>
    <name type="scientific">Homo sapiens</name>
    <name type="common">Human</name>
    <dbReference type="NCBI Taxonomy" id="9606"/>
    <lineage>
        <taxon>Eukaryota</taxon>
        <taxon>Metazoa</taxon>
        <taxon>Chordata</taxon>
        <taxon>Craniata</taxon>
        <taxon>Vertebrata</taxon>
        <taxon>Euteleostomi</taxon>
        <taxon>Mammalia</taxon>
        <taxon>Eutheria</taxon>
        <taxon>Euarchontoglires</taxon>
        <taxon>Primates</taxon>
        <taxon>Haplorrhini</taxon>
        <taxon>Catarrhini</taxon>
        <taxon>Hominidae</taxon>
        <taxon>Homo</taxon>
    </lineage>
</organism>
<evidence type="ECO:0000255" key="1"/>
<evidence type="ECO:0000256" key="2">
    <source>
        <dbReference type="SAM" id="MobiDB-lite"/>
    </source>
</evidence>
<evidence type="ECO:0000303" key="3">
    <source>
    </source>
</evidence>
<evidence type="ECO:0000303" key="4">
    <source>
    </source>
</evidence>
<evidence type="ECO:0000305" key="5"/>
<gene>
    <name type="primary">CCDC169</name>
    <name type="synonym">C13orf38</name>
</gene>
<keyword id="KW-0025">Alternative splicing</keyword>
<keyword id="KW-0175">Coiled coil</keyword>
<keyword id="KW-1185">Reference proteome</keyword>
<proteinExistence type="evidence at transcript level"/>
<accession>A6NNP5</accession>
<accession>A6NC13</accession>
<accession>A6NCT2</accession>
<accession>B7ZW45</accession>
<accession>B7ZW49</accession>
<accession>B9EJF2</accession>
<accession>Q9H1T4</accession>
<accession>Q9H1T5</accession>
<protein>
    <recommendedName>
        <fullName>Coiled-coil domain-containing protein 169</fullName>
    </recommendedName>
</protein>
<sequence length="214" mass="25253">MKEERNYNFDGVSTNRLKQQLLEEVRKKDAVQLSIFELRHKITELEAKLNTDNEGSEWKTRYETQLELNDELEKQIVYLKEKVEKIHGNSSDRLSSIRVYERMPVESLNTLLKQLEEEKKTLESQVKYYALKLEQESKAYQKINNERRTYLAEMSQGSGLHQVSKRQQVDQLPRMQENLVKTGRYNPAKQKTVSAKRGPVKKITRPNHLPELHP</sequence>
<reference key="1">
    <citation type="journal article" date="2004" name="Nat. Genet.">
        <title>Complete sequencing and characterization of 21,243 full-length human cDNAs.</title>
        <authorList>
            <person name="Ota T."/>
            <person name="Suzuki Y."/>
            <person name="Nishikawa T."/>
            <person name="Otsuki T."/>
            <person name="Sugiyama T."/>
            <person name="Irie R."/>
            <person name="Wakamatsu A."/>
            <person name="Hayashi K."/>
            <person name="Sato H."/>
            <person name="Nagai K."/>
            <person name="Kimura K."/>
            <person name="Makita H."/>
            <person name="Sekine M."/>
            <person name="Obayashi M."/>
            <person name="Nishi T."/>
            <person name="Shibahara T."/>
            <person name="Tanaka T."/>
            <person name="Ishii S."/>
            <person name="Yamamoto J."/>
            <person name="Saito K."/>
            <person name="Kawai Y."/>
            <person name="Isono Y."/>
            <person name="Nakamura Y."/>
            <person name="Nagahari K."/>
            <person name="Murakami K."/>
            <person name="Yasuda T."/>
            <person name="Iwayanagi T."/>
            <person name="Wagatsuma M."/>
            <person name="Shiratori A."/>
            <person name="Sudo H."/>
            <person name="Hosoiri T."/>
            <person name="Kaku Y."/>
            <person name="Kodaira H."/>
            <person name="Kondo H."/>
            <person name="Sugawara M."/>
            <person name="Takahashi M."/>
            <person name="Kanda K."/>
            <person name="Yokoi T."/>
            <person name="Furuya T."/>
            <person name="Kikkawa E."/>
            <person name="Omura Y."/>
            <person name="Abe K."/>
            <person name="Kamihara K."/>
            <person name="Katsuta N."/>
            <person name="Sato K."/>
            <person name="Tanikawa M."/>
            <person name="Yamazaki M."/>
            <person name="Ninomiya K."/>
            <person name="Ishibashi T."/>
            <person name="Yamashita H."/>
            <person name="Murakawa K."/>
            <person name="Fujimori K."/>
            <person name="Tanai H."/>
            <person name="Kimata M."/>
            <person name="Watanabe M."/>
            <person name="Hiraoka S."/>
            <person name="Chiba Y."/>
            <person name="Ishida S."/>
            <person name="Ono Y."/>
            <person name="Takiguchi S."/>
            <person name="Watanabe S."/>
            <person name="Yosida M."/>
            <person name="Hotuta T."/>
            <person name="Kusano J."/>
            <person name="Kanehori K."/>
            <person name="Takahashi-Fujii A."/>
            <person name="Hara H."/>
            <person name="Tanase T.-O."/>
            <person name="Nomura Y."/>
            <person name="Togiya S."/>
            <person name="Komai F."/>
            <person name="Hara R."/>
            <person name="Takeuchi K."/>
            <person name="Arita M."/>
            <person name="Imose N."/>
            <person name="Musashino K."/>
            <person name="Yuuki H."/>
            <person name="Oshima A."/>
            <person name="Sasaki N."/>
            <person name="Aotsuka S."/>
            <person name="Yoshikawa Y."/>
            <person name="Matsunawa H."/>
            <person name="Ichihara T."/>
            <person name="Shiohata N."/>
            <person name="Sano S."/>
            <person name="Moriya S."/>
            <person name="Momiyama H."/>
            <person name="Satoh N."/>
            <person name="Takami S."/>
            <person name="Terashima Y."/>
            <person name="Suzuki O."/>
            <person name="Nakagawa S."/>
            <person name="Senoh A."/>
            <person name="Mizoguchi H."/>
            <person name="Goto Y."/>
            <person name="Shimizu F."/>
            <person name="Wakebe H."/>
            <person name="Hishigaki H."/>
            <person name="Watanabe T."/>
            <person name="Sugiyama A."/>
            <person name="Takemoto M."/>
            <person name="Kawakami B."/>
            <person name="Yamazaki M."/>
            <person name="Watanabe K."/>
            <person name="Kumagai A."/>
            <person name="Itakura S."/>
            <person name="Fukuzumi Y."/>
            <person name="Fujimori Y."/>
            <person name="Komiyama M."/>
            <person name="Tashiro H."/>
            <person name="Tanigami A."/>
            <person name="Fujiwara T."/>
            <person name="Ono T."/>
            <person name="Yamada K."/>
            <person name="Fujii Y."/>
            <person name="Ozaki K."/>
            <person name="Hirao M."/>
            <person name="Ohmori Y."/>
            <person name="Kawabata A."/>
            <person name="Hikiji T."/>
            <person name="Kobatake N."/>
            <person name="Inagaki H."/>
            <person name="Ikema Y."/>
            <person name="Okamoto S."/>
            <person name="Okitani R."/>
            <person name="Kawakami T."/>
            <person name="Noguchi S."/>
            <person name="Itoh T."/>
            <person name="Shigeta K."/>
            <person name="Senba T."/>
            <person name="Matsumura K."/>
            <person name="Nakajima Y."/>
            <person name="Mizuno T."/>
            <person name="Morinaga M."/>
            <person name="Sasaki M."/>
            <person name="Togashi T."/>
            <person name="Oyama M."/>
            <person name="Hata H."/>
            <person name="Watanabe M."/>
            <person name="Komatsu T."/>
            <person name="Mizushima-Sugano J."/>
            <person name="Satoh T."/>
            <person name="Shirai Y."/>
            <person name="Takahashi Y."/>
            <person name="Nakagawa K."/>
            <person name="Okumura K."/>
            <person name="Nagase T."/>
            <person name="Nomura N."/>
            <person name="Kikuchi H."/>
            <person name="Masuho Y."/>
            <person name="Yamashita R."/>
            <person name="Nakai K."/>
            <person name="Yada T."/>
            <person name="Nakamura Y."/>
            <person name="Ohara O."/>
            <person name="Isogai T."/>
            <person name="Sugano S."/>
        </authorList>
    </citation>
    <scope>NUCLEOTIDE SEQUENCE [LARGE SCALE MRNA] (ISOFORM 5)</scope>
    <source>
        <tissue>Hippocampus</tissue>
    </source>
</reference>
<reference key="2">
    <citation type="journal article" date="2004" name="Nature">
        <title>The DNA sequence and analysis of human chromosome 13.</title>
        <authorList>
            <person name="Dunham A."/>
            <person name="Matthews L.H."/>
            <person name="Burton J."/>
            <person name="Ashurst J.L."/>
            <person name="Howe K.L."/>
            <person name="Ashcroft K.J."/>
            <person name="Beare D.M."/>
            <person name="Burford D.C."/>
            <person name="Hunt S.E."/>
            <person name="Griffiths-Jones S."/>
            <person name="Jones M.C."/>
            <person name="Keenan S.J."/>
            <person name="Oliver K."/>
            <person name="Scott C.E."/>
            <person name="Ainscough R."/>
            <person name="Almeida J.P."/>
            <person name="Ambrose K.D."/>
            <person name="Andrews D.T."/>
            <person name="Ashwell R.I.S."/>
            <person name="Babbage A.K."/>
            <person name="Bagguley C.L."/>
            <person name="Bailey J."/>
            <person name="Bannerjee R."/>
            <person name="Barlow K.F."/>
            <person name="Bates K."/>
            <person name="Beasley H."/>
            <person name="Bird C.P."/>
            <person name="Bray-Allen S."/>
            <person name="Brown A.J."/>
            <person name="Brown J.Y."/>
            <person name="Burrill W."/>
            <person name="Carder C."/>
            <person name="Carter N.P."/>
            <person name="Chapman J.C."/>
            <person name="Clamp M.E."/>
            <person name="Clark S.Y."/>
            <person name="Clarke G."/>
            <person name="Clee C.M."/>
            <person name="Clegg S.C."/>
            <person name="Cobley V."/>
            <person name="Collins J.E."/>
            <person name="Corby N."/>
            <person name="Coville G.J."/>
            <person name="Deloukas P."/>
            <person name="Dhami P."/>
            <person name="Dunham I."/>
            <person name="Dunn M."/>
            <person name="Earthrowl M.E."/>
            <person name="Ellington A.G."/>
            <person name="Faulkner L."/>
            <person name="Frankish A.G."/>
            <person name="Frankland J."/>
            <person name="French L."/>
            <person name="Garner P."/>
            <person name="Garnett J."/>
            <person name="Gilbert J.G.R."/>
            <person name="Gilson C.J."/>
            <person name="Ghori J."/>
            <person name="Grafham D.V."/>
            <person name="Gribble S.M."/>
            <person name="Griffiths C."/>
            <person name="Hall R.E."/>
            <person name="Hammond S."/>
            <person name="Harley J.L."/>
            <person name="Hart E.A."/>
            <person name="Heath P.D."/>
            <person name="Howden P.J."/>
            <person name="Huckle E.J."/>
            <person name="Hunt P.J."/>
            <person name="Hunt A.R."/>
            <person name="Johnson C."/>
            <person name="Johnson D."/>
            <person name="Kay M."/>
            <person name="Kimberley A.M."/>
            <person name="King A."/>
            <person name="Laird G.K."/>
            <person name="Langford C.J."/>
            <person name="Lawlor S."/>
            <person name="Leongamornlert D.A."/>
            <person name="Lloyd D.M."/>
            <person name="Lloyd C."/>
            <person name="Loveland J.E."/>
            <person name="Lovell J."/>
            <person name="Martin S."/>
            <person name="Mashreghi-Mohammadi M."/>
            <person name="McLaren S.J."/>
            <person name="McMurray A."/>
            <person name="Milne S."/>
            <person name="Moore M.J.F."/>
            <person name="Nickerson T."/>
            <person name="Palmer S.A."/>
            <person name="Pearce A.V."/>
            <person name="Peck A.I."/>
            <person name="Pelan S."/>
            <person name="Phillimore B."/>
            <person name="Porter K.M."/>
            <person name="Rice C.M."/>
            <person name="Searle S."/>
            <person name="Sehra H.K."/>
            <person name="Shownkeen R."/>
            <person name="Skuce C.D."/>
            <person name="Smith M."/>
            <person name="Steward C.A."/>
            <person name="Sycamore N."/>
            <person name="Tester J."/>
            <person name="Thomas D.W."/>
            <person name="Tracey A."/>
            <person name="Tromans A."/>
            <person name="Tubby B."/>
            <person name="Wall M."/>
            <person name="Wallis J.M."/>
            <person name="West A.P."/>
            <person name="Whitehead S.L."/>
            <person name="Willey D.L."/>
            <person name="Wilming L."/>
            <person name="Wray P.W."/>
            <person name="Wright M.W."/>
            <person name="Young L."/>
            <person name="Coulson A."/>
            <person name="Durbin R.M."/>
            <person name="Hubbard T."/>
            <person name="Sulston J.E."/>
            <person name="Beck S."/>
            <person name="Bentley D.R."/>
            <person name="Rogers J."/>
            <person name="Ross M.T."/>
        </authorList>
    </citation>
    <scope>NUCLEOTIDE SEQUENCE [LARGE SCALE GENOMIC DNA]</scope>
</reference>
<reference key="3">
    <citation type="journal article" date="2004" name="Genome Res.">
        <title>The status, quality, and expansion of the NIH full-length cDNA project: the Mammalian Gene Collection (MGC).</title>
        <authorList>
            <consortium name="The MGC Project Team"/>
        </authorList>
    </citation>
    <scope>NUCLEOTIDE SEQUENCE [LARGE SCALE MRNA] (ISOFORMS 3; 4 AND 6)</scope>
</reference>
<feature type="chain" id="PRO_0000341366" description="Coiled-coil domain-containing protein 169">
    <location>
        <begin position="1"/>
        <end position="214"/>
    </location>
</feature>
<feature type="region of interest" description="Disordered" evidence="2">
    <location>
        <begin position="155"/>
        <end position="214"/>
    </location>
</feature>
<feature type="coiled-coil region" evidence="1">
    <location>
        <begin position="29"/>
        <end position="154"/>
    </location>
</feature>
<feature type="compositionally biased region" description="Polar residues" evidence="2">
    <location>
        <begin position="155"/>
        <end position="170"/>
    </location>
</feature>
<feature type="splice variant" id="VSP_040479" description="In isoform 3 and isoform 5." evidence="3 4">
    <location>
        <begin position="1"/>
        <end position="102"/>
    </location>
</feature>
<feature type="splice variant" id="VSP_043810" description="In isoform 6." evidence="4">
    <location>
        <begin position="1"/>
        <end position="100"/>
    </location>
</feature>
<feature type="splice variant" id="VSP_043811" description="In isoform 6." evidence="4">
    <original>ERMPV</original>
    <variation>METLQ</variation>
    <location>
        <begin position="101"/>
        <end position="105"/>
    </location>
</feature>
<feature type="splice variant" id="VSP_035636" description="In isoform 2." evidence="5">
    <original>ESLNTLLKQL</original>
    <variation>VSRNVIKHKE</variation>
    <location>
        <begin position="106"/>
        <end position="115"/>
    </location>
</feature>
<feature type="splice variant" id="VSP_035637" description="In isoform 2." evidence="5">
    <location>
        <begin position="116"/>
        <end position="214"/>
    </location>
</feature>
<feature type="splice variant" id="VSP_040480" description="In isoform 3, isoform 4 and isoform 6." evidence="4">
    <original>GRYNPAKQKTVSAKRGPVKKITRPNHLPELHP</original>
    <variation>LLLKEELDPLKVSCLETLGFSAAGVAGPENRTCLGQKALWPACLHGSSTLAVCQTHLKS</variation>
    <location>
        <begin position="183"/>
        <end position="214"/>
    </location>
</feature>
<feature type="sequence variant" id="VAR_057811" description="In dbSNP:rs9546897.">
    <original>K</original>
    <variation>R</variation>
    <location>
        <position position="120"/>
    </location>
</feature>